<gene>
    <name evidence="1" type="primary">infA2</name>
    <name type="ordered locus">Bcep1808_5027</name>
</gene>
<accession>A4JNX5</accession>
<feature type="chain" id="PRO_0000338788" description="Translation initiation factor IF-1 2">
    <location>
        <begin position="1"/>
        <end position="87"/>
    </location>
</feature>
<feature type="domain" description="S1-like" evidence="1">
    <location>
        <begin position="1"/>
        <end position="72"/>
    </location>
</feature>
<protein>
    <recommendedName>
        <fullName evidence="1">Translation initiation factor IF-1 2</fullName>
    </recommendedName>
</protein>
<proteinExistence type="inferred from homology"/>
<organism>
    <name type="scientific">Burkholderia vietnamiensis (strain G4 / LMG 22486)</name>
    <name type="common">Burkholderia cepacia (strain R1808)</name>
    <dbReference type="NCBI Taxonomy" id="269482"/>
    <lineage>
        <taxon>Bacteria</taxon>
        <taxon>Pseudomonadati</taxon>
        <taxon>Pseudomonadota</taxon>
        <taxon>Betaproteobacteria</taxon>
        <taxon>Burkholderiales</taxon>
        <taxon>Burkholderiaceae</taxon>
        <taxon>Burkholderia</taxon>
        <taxon>Burkholderia cepacia complex</taxon>
    </lineage>
</organism>
<evidence type="ECO:0000255" key="1">
    <source>
        <dbReference type="HAMAP-Rule" id="MF_00075"/>
    </source>
</evidence>
<sequence length="87" mass="9801">MAKEELLELDGIVDEVLPDSKYRVTLENGVVVGAYASGRMRKNHIRILAGDRVTLELSVYDLTKGRINFRHKDANSPRPPRAGQARR</sequence>
<name>IF12_BURVG</name>
<comment type="function">
    <text evidence="1">One of the essential components for the initiation of protein synthesis. Stabilizes the binding of IF-2 and IF-3 on the 30S subunit to which N-formylmethionyl-tRNA(fMet) subsequently binds. Helps modulate mRNA selection, yielding the 30S pre-initiation complex (PIC). Upon addition of the 50S ribosomal subunit IF-1, IF-2 and IF-3 are released leaving the mature 70S translation initiation complex.</text>
</comment>
<comment type="subunit">
    <text evidence="1">Component of the 30S ribosomal translation pre-initiation complex which assembles on the 30S ribosome in the order IF-2 and IF-3, IF-1 and N-formylmethionyl-tRNA(fMet); mRNA recruitment can occur at any time during PIC assembly.</text>
</comment>
<comment type="subcellular location">
    <subcellularLocation>
        <location evidence="1">Cytoplasm</location>
    </subcellularLocation>
</comment>
<comment type="similarity">
    <text evidence="1">Belongs to the IF-1 family.</text>
</comment>
<reference key="1">
    <citation type="submission" date="2007-03" db="EMBL/GenBank/DDBJ databases">
        <title>Complete sequence of chromosome 2 of Burkholderia vietnamiensis G4.</title>
        <authorList>
            <consortium name="US DOE Joint Genome Institute"/>
            <person name="Copeland A."/>
            <person name="Lucas S."/>
            <person name="Lapidus A."/>
            <person name="Barry K."/>
            <person name="Detter J.C."/>
            <person name="Glavina del Rio T."/>
            <person name="Hammon N."/>
            <person name="Israni S."/>
            <person name="Dalin E."/>
            <person name="Tice H."/>
            <person name="Pitluck S."/>
            <person name="Chain P."/>
            <person name="Malfatti S."/>
            <person name="Shin M."/>
            <person name="Vergez L."/>
            <person name="Schmutz J."/>
            <person name="Larimer F."/>
            <person name="Land M."/>
            <person name="Hauser L."/>
            <person name="Kyrpides N."/>
            <person name="Tiedje J."/>
            <person name="Richardson P."/>
        </authorList>
    </citation>
    <scope>NUCLEOTIDE SEQUENCE [LARGE SCALE GENOMIC DNA]</scope>
    <source>
        <strain>G4 / LMG 22486</strain>
    </source>
</reference>
<dbReference type="EMBL" id="CP000615">
    <property type="protein sequence ID" value="ABO57978.1"/>
    <property type="molecule type" value="Genomic_DNA"/>
</dbReference>
<dbReference type="SMR" id="A4JNX5"/>
<dbReference type="KEGG" id="bvi:Bcep1808_5027"/>
<dbReference type="eggNOG" id="COG0361">
    <property type="taxonomic scope" value="Bacteria"/>
</dbReference>
<dbReference type="HOGENOM" id="CLU_151267_4_1_4"/>
<dbReference type="Proteomes" id="UP000002287">
    <property type="component" value="Chromosome 2"/>
</dbReference>
<dbReference type="GO" id="GO:0005829">
    <property type="term" value="C:cytosol"/>
    <property type="evidence" value="ECO:0007669"/>
    <property type="project" value="TreeGrafter"/>
</dbReference>
<dbReference type="GO" id="GO:0043022">
    <property type="term" value="F:ribosome binding"/>
    <property type="evidence" value="ECO:0007669"/>
    <property type="project" value="UniProtKB-UniRule"/>
</dbReference>
<dbReference type="GO" id="GO:0019843">
    <property type="term" value="F:rRNA binding"/>
    <property type="evidence" value="ECO:0007669"/>
    <property type="project" value="UniProtKB-UniRule"/>
</dbReference>
<dbReference type="GO" id="GO:0003743">
    <property type="term" value="F:translation initiation factor activity"/>
    <property type="evidence" value="ECO:0007669"/>
    <property type="project" value="UniProtKB-UniRule"/>
</dbReference>
<dbReference type="CDD" id="cd04451">
    <property type="entry name" value="S1_IF1"/>
    <property type="match status" value="1"/>
</dbReference>
<dbReference type="FunFam" id="2.40.50.140:FF:000002">
    <property type="entry name" value="Translation initiation factor IF-1"/>
    <property type="match status" value="1"/>
</dbReference>
<dbReference type="Gene3D" id="2.40.50.140">
    <property type="entry name" value="Nucleic acid-binding proteins"/>
    <property type="match status" value="1"/>
</dbReference>
<dbReference type="HAMAP" id="MF_00075">
    <property type="entry name" value="IF_1"/>
    <property type="match status" value="1"/>
</dbReference>
<dbReference type="InterPro" id="IPR012340">
    <property type="entry name" value="NA-bd_OB-fold"/>
</dbReference>
<dbReference type="InterPro" id="IPR006196">
    <property type="entry name" value="RNA-binding_domain_S1_IF1"/>
</dbReference>
<dbReference type="InterPro" id="IPR004368">
    <property type="entry name" value="TIF_IF1"/>
</dbReference>
<dbReference type="NCBIfam" id="TIGR00008">
    <property type="entry name" value="infA"/>
    <property type="match status" value="1"/>
</dbReference>
<dbReference type="PANTHER" id="PTHR33370">
    <property type="entry name" value="TRANSLATION INITIATION FACTOR IF-1, CHLOROPLASTIC"/>
    <property type="match status" value="1"/>
</dbReference>
<dbReference type="PANTHER" id="PTHR33370:SF1">
    <property type="entry name" value="TRANSLATION INITIATION FACTOR IF-1, CHLOROPLASTIC"/>
    <property type="match status" value="1"/>
</dbReference>
<dbReference type="Pfam" id="PF01176">
    <property type="entry name" value="eIF-1a"/>
    <property type="match status" value="1"/>
</dbReference>
<dbReference type="SUPFAM" id="SSF50249">
    <property type="entry name" value="Nucleic acid-binding proteins"/>
    <property type="match status" value="1"/>
</dbReference>
<dbReference type="PROSITE" id="PS50832">
    <property type="entry name" value="S1_IF1_TYPE"/>
    <property type="match status" value="1"/>
</dbReference>
<keyword id="KW-0963">Cytoplasm</keyword>
<keyword id="KW-0396">Initiation factor</keyword>
<keyword id="KW-0648">Protein biosynthesis</keyword>
<keyword id="KW-0694">RNA-binding</keyword>
<keyword id="KW-0699">rRNA-binding</keyword>